<sequence>MTTESGSDSESKPDQEAEPQEAAGAQGRAGAPVPEPPKEEQQQALEQFAAAAAHSTPVRREVTDKEQEFAARAAKQLEYQQLEDDKLSQKSSSSKLSRSPLKIVKKPKSMQCKVILLDGSEYTCDVEKRSRGQVLFDKVCEHLNLLEKDYFGLTYRDAENQKNWLDPAKEIKKQVRSGAWHFSFNVKFYPPDPAQLSEDITRYYLCLQLRDDIVSGRLPCSFVTLALLGSYTVQSELGDYDPDECGSDYISEFRFAPNHTKELEDKVIELHKSHRGMTPAEAEMHFLENAKKLSMYGVDLHHAKDSEGVEIMLGVCASGLLIYRDRLRINRFAWPKVLKISYKRNNFYIKIRPGEFEQFESTIGFKLPNHRAAKRLWKVCVEHHTFFRLLLPEAPPKKFLTLGSKFRYSGRTQAQTRRASALIDRPAPYFERSSSKRYTMSRSLDGEVGTGQYATTKGISQTNLITTVTPEKKAEEERDEEEDKRRKGEEVTPISAIRHEGKSPGLGTDSCPLSPPSTHCAPTSPTELRRRCKENDCKLPGYEPSRAEHLPGEPALDSDGPGRPYLGDQDVAFSYRQQTGKGTTLFSFSLQLPESFPSLLDDDGYLSFPNLSETNLLPQSLQHYLPIRSPSLVPCFLFIFFFLLSASFSVPYALTLSFPLALCLCYLEPKAASLSASLDNDPSDSSEEETDSERTDTAADGETTATESDQEEDAELKAQELEKTQDDLMKHQTNISELKRTFLETSTDTAVTNEWEKRLSTSPVRLAARQEDAPMIEPLVPEETKQSSGEKLMDGSEIFSLLESARKPTEFIGGVTSTSQSWVQKMETKTESSGIETEPTVHHLPLSTEKVVQETVLVEERRVVHASGDASYSAGDSGDAAAQPAFTGIKGKEGSALTEGAKEEGGEEVAKAVLEQEETAAASRERQEEQSAAIHISETLEQKPHFESSTVKTETISFGSVSPGGVKLEISTKEVPVVHTETKTITYESSQVDPGTDLEPGVLMSAQTITSETTSTTTTTHITKTVKGGISETRIEKRIVITGDADIDHDQALAQAIKEAKEQHPDMSVTKVVVHKETEITPEDGED</sequence>
<gene>
    <name evidence="16" type="primary">EPB41L3</name>
    <name evidence="16" type="synonym">DAL1</name>
    <name evidence="16" type="synonym">KIAA0987</name>
</gene>
<accession>Q9Y2J2</accession>
<accession>B7Z4I5</accession>
<accession>F5GX05</accession>
<accession>O95713</accession>
<accession>Q9BRP5</accession>
<evidence type="ECO:0000250" key="1"/>
<evidence type="ECO:0000250" key="2">
    <source>
        <dbReference type="UniProtKB" id="Q9WV92"/>
    </source>
</evidence>
<evidence type="ECO:0000255" key="3"/>
<evidence type="ECO:0000255" key="4">
    <source>
        <dbReference type="PROSITE-ProRule" id="PRU00084"/>
    </source>
</evidence>
<evidence type="ECO:0000256" key="5">
    <source>
        <dbReference type="SAM" id="MobiDB-lite"/>
    </source>
</evidence>
<evidence type="ECO:0000269" key="6">
    <source>
    </source>
</evidence>
<evidence type="ECO:0000269" key="7">
    <source>
    </source>
</evidence>
<evidence type="ECO:0000269" key="8">
    <source>
    </source>
</evidence>
<evidence type="ECO:0000269" key="9">
    <source>
    </source>
</evidence>
<evidence type="ECO:0000269" key="10">
    <source>
    </source>
</evidence>
<evidence type="ECO:0000269" key="11">
    <source>
    </source>
</evidence>
<evidence type="ECO:0000303" key="12">
    <source>
    </source>
</evidence>
<evidence type="ECO:0000303" key="13">
    <source>
    </source>
</evidence>
<evidence type="ECO:0000303" key="14">
    <source>
    </source>
</evidence>
<evidence type="ECO:0000305" key="15"/>
<evidence type="ECO:0000312" key="16">
    <source>
        <dbReference type="HGNC" id="HGNC:3380"/>
    </source>
</evidence>
<evidence type="ECO:0007744" key="17">
    <source>
    </source>
</evidence>
<evidence type="ECO:0007744" key="18">
    <source>
    </source>
</evidence>
<evidence type="ECO:0007744" key="19">
    <source>
    </source>
</evidence>
<evidence type="ECO:0007744" key="20">
    <source>
    </source>
</evidence>
<evidence type="ECO:0007829" key="21">
    <source>
        <dbReference type="PDB" id="2HE7"/>
    </source>
</evidence>
<evidence type="ECO:0007829" key="22">
    <source>
        <dbReference type="PDB" id="5RZ8"/>
    </source>
</evidence>
<evidence type="ECO:0007829" key="23">
    <source>
        <dbReference type="PDB" id="6IBE"/>
    </source>
</evidence>
<comment type="function">
    <text evidence="7 8 9 11">Tumor suppressor that inhibits cell proliferation and promotes apoptosis. Modulates the activity of protein arginine N-methyltransferases, including PRMT3 and PRMT5.</text>
</comment>
<comment type="subunit">
    <text evidence="6 7 8 10">Interacts (via FERM domain) with CADM1 (PubMed:12234973, PubMed:21131357). Interacts (via FERM domain) with PRMT3; the interaction is direct and inhibits the protein-arginine N-methyltransferase activity of PRMT3 (PubMed:15334060). Interacts with PRMT5 (PubMed:15334060, PubMed:15737618). Interacts with PRMT6 (PubMed:15334060).</text>
</comment>
<comment type="interaction">
    <interactant intactId="EBI-310986">
        <id>Q9Y2J2</id>
    </interactant>
    <interactant intactId="EBI-359832">
        <id>P61981</id>
        <label>YWHAG</label>
    </interactant>
    <organismsDiffer>false</organismsDiffer>
    <experiments>7</experiments>
</comment>
<comment type="interaction">
    <interactant intactId="EBI-11100740">
        <id>Q9Y2J2-2</id>
    </interactant>
    <interactant intactId="EBI-12023934">
        <id>Q5MJ10</id>
        <label>SPANXN2</label>
    </interactant>
    <organismsDiffer>false</organismsDiffer>
    <experiments>3</experiments>
</comment>
<comment type="interaction">
    <interactant intactId="EBI-10326138">
        <id>Q9Y2J2-3</id>
    </interactant>
    <interactant intactId="EBI-533224">
        <id>P15884</id>
        <label>TCF4</label>
    </interactant>
    <organismsDiffer>false</organismsDiffer>
    <experiments>3</experiments>
</comment>
<comment type="subcellular location">
    <subcellularLocation>
        <location evidence="1">Cytoplasm</location>
        <location evidence="1">Cytoskeleton</location>
    </subcellularLocation>
    <subcellularLocation>
        <location evidence="11">Cell junction</location>
    </subcellularLocation>
    <subcellularLocation>
        <location evidence="11">Cell membrane</location>
        <topology evidence="11">Peripheral membrane protein</topology>
        <orientation evidence="11">Cytoplasmic side</orientation>
    </subcellularLocation>
    <subcellularLocation>
        <location evidence="11">Cytoplasm</location>
    </subcellularLocation>
    <text>Detected in the cytoplasm of actively dividing cells.</text>
</comment>
<comment type="alternative products">
    <event type="alternative splicing"/>
    <isoform>
        <id>Q9Y2J2-1</id>
        <name>1</name>
        <sequence type="displayed"/>
    </isoform>
    <isoform>
        <id>Q9Y2J2-2</id>
        <name>2</name>
        <sequence type="described" ref="VSP_000482 VSP_000483 VSP_000484 VSP_000485"/>
    </isoform>
    <isoform>
        <id>Q9Y2J2-3</id>
        <name>3</name>
        <sequence type="described" ref="VSP_000482 VSP_000483 VSP_000484 VSP_000485 VSP_000486"/>
    </isoform>
    <isoform>
        <id>Q9Y2J2-4</id>
        <name>4</name>
        <sequence type="described" ref="VSP_000482 VSP_000483 VSP_054819 VSP_054820"/>
    </isoform>
    <text>Additional isoforms seem to exist.</text>
</comment>
<comment type="tissue specificity">
    <text evidence="11">Expressed at high levels in brain, with lower levels in kidney, intestine, and testis. Detected in lung.</text>
</comment>
<comment type="sequence caution" evidence="15">
    <conflict type="frameshift">
        <sequence resource="EMBL-CDS" id="AAC79806"/>
    </conflict>
</comment>
<comment type="sequence caution" evidence="15">
    <conflict type="erroneous initiation">
        <sequence resource="EMBL-CDS" id="BAA76831"/>
    </conflict>
    <text>Extended N-terminus.</text>
</comment>
<comment type="online information" name="Atlas of Genetics and Cytogenetics in Oncology and Haematology">
    <link uri="https://atlasgeneticsoncology.org/gene/40458/epb41l3-(erythrocyte-membrane-protein-band-4-1-like-3)"/>
</comment>
<dbReference type="EMBL" id="AF069072">
    <property type="protein sequence ID" value="AAC79806.1"/>
    <property type="status" value="ALT_FRAME"/>
    <property type="molecule type" value="mRNA"/>
</dbReference>
<dbReference type="EMBL" id="AB023204">
    <property type="protein sequence ID" value="BAA76831.1"/>
    <property type="status" value="ALT_INIT"/>
    <property type="molecule type" value="mRNA"/>
</dbReference>
<dbReference type="EMBL" id="AK297406">
    <property type="protein sequence ID" value="BAH12571.1"/>
    <property type="molecule type" value="mRNA"/>
</dbReference>
<dbReference type="EMBL" id="AP001032">
    <property type="status" value="NOT_ANNOTATED_CDS"/>
    <property type="molecule type" value="Genomic_DNA"/>
</dbReference>
<dbReference type="EMBL" id="AP005059">
    <property type="status" value="NOT_ANNOTATED_CDS"/>
    <property type="molecule type" value="Genomic_DNA"/>
</dbReference>
<dbReference type="EMBL" id="AP005671">
    <property type="status" value="NOT_ANNOTATED_CDS"/>
    <property type="molecule type" value="Genomic_DNA"/>
</dbReference>
<dbReference type="EMBL" id="BC006141">
    <property type="protein sequence ID" value="AAH06141.1"/>
    <property type="molecule type" value="mRNA"/>
</dbReference>
<dbReference type="CCDS" id="CCDS11838.1">
    <molecule id="Q9Y2J2-1"/>
</dbReference>
<dbReference type="CCDS" id="CCDS62381.1">
    <molecule id="Q9Y2J2-2"/>
</dbReference>
<dbReference type="CCDS" id="CCDS62382.1">
    <molecule id="Q9Y2J2-4"/>
</dbReference>
<dbReference type="RefSeq" id="NP_001268462.1">
    <molecule id="Q9Y2J2-4"/>
    <property type="nucleotide sequence ID" value="NM_001281533.2"/>
</dbReference>
<dbReference type="RefSeq" id="NP_001268463.1">
    <molecule id="Q9Y2J2-2"/>
    <property type="nucleotide sequence ID" value="NM_001281534.3"/>
</dbReference>
<dbReference type="RefSeq" id="NP_001268464.1">
    <property type="nucleotide sequence ID" value="NM_001281535.1"/>
</dbReference>
<dbReference type="RefSeq" id="NP_001371611.1">
    <molecule id="Q9Y2J2-4"/>
    <property type="nucleotide sequence ID" value="NM_001384682.1"/>
</dbReference>
<dbReference type="RefSeq" id="NP_036439.2">
    <molecule id="Q9Y2J2-1"/>
    <property type="nucleotide sequence ID" value="NM_012307.3"/>
</dbReference>
<dbReference type="RefSeq" id="XP_016881125.1">
    <property type="nucleotide sequence ID" value="XM_017025636.1"/>
</dbReference>
<dbReference type="PDB" id="2HE7">
    <property type="method" value="X-ray"/>
    <property type="resolution" value="2.00 A"/>
    <property type="chains" value="A=108-390"/>
</dbReference>
<dbReference type="PDB" id="3BIN">
    <property type="method" value="X-ray"/>
    <property type="resolution" value="2.30 A"/>
    <property type="chains" value="A=109-390"/>
</dbReference>
<dbReference type="PDB" id="5RYM">
    <property type="method" value="X-ray"/>
    <property type="resolution" value="1.64 A"/>
    <property type="chains" value="A=107-390"/>
</dbReference>
<dbReference type="PDB" id="5RYN">
    <property type="method" value="X-ray"/>
    <property type="resolution" value="1.88 A"/>
    <property type="chains" value="A=107-390"/>
</dbReference>
<dbReference type="PDB" id="5RYO">
    <property type="method" value="X-ray"/>
    <property type="resolution" value="1.58 A"/>
    <property type="chains" value="A=107-390"/>
</dbReference>
<dbReference type="PDB" id="5RYP">
    <property type="method" value="X-ray"/>
    <property type="resolution" value="1.63 A"/>
    <property type="chains" value="A=107-390"/>
</dbReference>
<dbReference type="PDB" id="5RYQ">
    <property type="method" value="X-ray"/>
    <property type="resolution" value="1.64 A"/>
    <property type="chains" value="A=107-390"/>
</dbReference>
<dbReference type="PDB" id="5RYR">
    <property type="method" value="X-ray"/>
    <property type="resolution" value="1.87 A"/>
    <property type="chains" value="A=107-390"/>
</dbReference>
<dbReference type="PDB" id="5RYS">
    <property type="method" value="X-ray"/>
    <property type="resolution" value="1.75 A"/>
    <property type="chains" value="A=107-390"/>
</dbReference>
<dbReference type="PDB" id="5RYT">
    <property type="method" value="X-ray"/>
    <property type="resolution" value="1.72 A"/>
    <property type="chains" value="A=107-390"/>
</dbReference>
<dbReference type="PDB" id="5RYU">
    <property type="method" value="X-ray"/>
    <property type="resolution" value="1.63 A"/>
    <property type="chains" value="A=107-390"/>
</dbReference>
<dbReference type="PDB" id="5RYV">
    <property type="method" value="X-ray"/>
    <property type="resolution" value="1.69 A"/>
    <property type="chains" value="A=107-390"/>
</dbReference>
<dbReference type="PDB" id="5RYW">
    <property type="method" value="X-ray"/>
    <property type="resolution" value="1.66 A"/>
    <property type="chains" value="A=107-390"/>
</dbReference>
<dbReference type="PDB" id="5RYX">
    <property type="method" value="X-ray"/>
    <property type="resolution" value="1.63 A"/>
    <property type="chains" value="A=107-390"/>
</dbReference>
<dbReference type="PDB" id="5RYY">
    <property type="method" value="X-ray"/>
    <property type="resolution" value="1.69 A"/>
    <property type="chains" value="A=107-390"/>
</dbReference>
<dbReference type="PDB" id="5RYZ">
    <property type="method" value="X-ray"/>
    <property type="resolution" value="1.61 A"/>
    <property type="chains" value="A=107-390"/>
</dbReference>
<dbReference type="PDB" id="5RZ0">
    <property type="method" value="X-ray"/>
    <property type="resolution" value="1.74 A"/>
    <property type="chains" value="A=107-390"/>
</dbReference>
<dbReference type="PDB" id="5RZ1">
    <property type="method" value="X-ray"/>
    <property type="resolution" value="1.62 A"/>
    <property type="chains" value="A=107-390"/>
</dbReference>
<dbReference type="PDB" id="5RZ2">
    <property type="method" value="X-ray"/>
    <property type="resolution" value="1.77 A"/>
    <property type="chains" value="A=107-390"/>
</dbReference>
<dbReference type="PDB" id="5RZ3">
    <property type="method" value="X-ray"/>
    <property type="resolution" value="1.74 A"/>
    <property type="chains" value="A=107-390"/>
</dbReference>
<dbReference type="PDB" id="5RZ4">
    <property type="method" value="X-ray"/>
    <property type="resolution" value="1.61 A"/>
    <property type="chains" value="A=107-390"/>
</dbReference>
<dbReference type="PDB" id="5RZ5">
    <property type="method" value="X-ray"/>
    <property type="resolution" value="1.63 A"/>
    <property type="chains" value="A=107-390"/>
</dbReference>
<dbReference type="PDB" id="5RZ6">
    <property type="method" value="X-ray"/>
    <property type="resolution" value="1.64 A"/>
    <property type="chains" value="A=107-390"/>
</dbReference>
<dbReference type="PDB" id="5RZ7">
    <property type="method" value="X-ray"/>
    <property type="resolution" value="1.76 A"/>
    <property type="chains" value="A=107-390"/>
</dbReference>
<dbReference type="PDB" id="5RZ8">
    <property type="method" value="X-ray"/>
    <property type="resolution" value="1.66 A"/>
    <property type="chains" value="A=107-390"/>
</dbReference>
<dbReference type="PDB" id="5RZ9">
    <property type="method" value="X-ray"/>
    <property type="resolution" value="1.79 A"/>
    <property type="chains" value="A=107-390"/>
</dbReference>
<dbReference type="PDB" id="5RZA">
    <property type="method" value="X-ray"/>
    <property type="resolution" value="1.89 A"/>
    <property type="chains" value="A=107-390"/>
</dbReference>
<dbReference type="PDB" id="5RZB">
    <property type="method" value="X-ray"/>
    <property type="resolution" value="1.59 A"/>
    <property type="chains" value="A=107-390"/>
</dbReference>
<dbReference type="PDB" id="5RZC">
    <property type="method" value="X-ray"/>
    <property type="resolution" value="1.75 A"/>
    <property type="chains" value="A=107-390"/>
</dbReference>
<dbReference type="PDB" id="5RZD">
    <property type="method" value="X-ray"/>
    <property type="resolution" value="1.81 A"/>
    <property type="chains" value="A=107-390"/>
</dbReference>
<dbReference type="PDB" id="5RZE">
    <property type="method" value="X-ray"/>
    <property type="resolution" value="1.69 A"/>
    <property type="chains" value="A=107-390"/>
</dbReference>
<dbReference type="PDB" id="5RZF">
    <property type="method" value="X-ray"/>
    <property type="resolution" value="1.76 A"/>
    <property type="chains" value="A=107-390"/>
</dbReference>
<dbReference type="PDB" id="5RZG">
    <property type="method" value="X-ray"/>
    <property type="resolution" value="1.70 A"/>
    <property type="chains" value="A=107-390"/>
</dbReference>
<dbReference type="PDB" id="5RZH">
    <property type="method" value="X-ray"/>
    <property type="resolution" value="1.88 A"/>
    <property type="chains" value="A=107-390"/>
</dbReference>
<dbReference type="PDB" id="5RZI">
    <property type="method" value="X-ray"/>
    <property type="resolution" value="2.09 A"/>
    <property type="chains" value="A=107-390"/>
</dbReference>
<dbReference type="PDB" id="5RZJ">
    <property type="method" value="X-ray"/>
    <property type="resolution" value="1.68 A"/>
    <property type="chains" value="A=107-390"/>
</dbReference>
<dbReference type="PDB" id="5RZK">
    <property type="method" value="X-ray"/>
    <property type="resolution" value="1.84 A"/>
    <property type="chains" value="A=107-390"/>
</dbReference>
<dbReference type="PDB" id="5RZL">
    <property type="method" value="X-ray"/>
    <property type="resolution" value="1.71 A"/>
    <property type="chains" value="A=107-390"/>
</dbReference>
<dbReference type="PDB" id="5RZM">
    <property type="method" value="X-ray"/>
    <property type="resolution" value="1.71 A"/>
    <property type="chains" value="A=107-390"/>
</dbReference>
<dbReference type="PDB" id="5RZN">
    <property type="method" value="X-ray"/>
    <property type="resolution" value="1.83 A"/>
    <property type="chains" value="A=107-390"/>
</dbReference>
<dbReference type="PDB" id="5RZO">
    <property type="method" value="X-ray"/>
    <property type="resolution" value="1.97 A"/>
    <property type="chains" value="A=107-390"/>
</dbReference>
<dbReference type="PDB" id="5RZP">
    <property type="method" value="X-ray"/>
    <property type="resolution" value="1.70 A"/>
    <property type="chains" value="A=107-390"/>
</dbReference>
<dbReference type="PDB" id="5RZQ">
    <property type="method" value="X-ray"/>
    <property type="resolution" value="1.88 A"/>
    <property type="chains" value="A=107-390"/>
</dbReference>
<dbReference type="PDB" id="5RZR">
    <property type="method" value="X-ray"/>
    <property type="resolution" value="1.78 A"/>
    <property type="chains" value="A=107-390"/>
</dbReference>
<dbReference type="PDB" id="5RZS">
    <property type="method" value="X-ray"/>
    <property type="resolution" value="1.69 A"/>
    <property type="chains" value="A=107-390"/>
</dbReference>
<dbReference type="PDB" id="5RZT">
    <property type="method" value="X-ray"/>
    <property type="resolution" value="1.79 A"/>
    <property type="chains" value="A=107-390"/>
</dbReference>
<dbReference type="PDB" id="5RZU">
    <property type="method" value="X-ray"/>
    <property type="resolution" value="1.66 A"/>
    <property type="chains" value="A=107-390"/>
</dbReference>
<dbReference type="PDB" id="5RZV">
    <property type="method" value="X-ray"/>
    <property type="resolution" value="1.75 A"/>
    <property type="chains" value="A=107-390"/>
</dbReference>
<dbReference type="PDB" id="5RZW">
    <property type="method" value="X-ray"/>
    <property type="resolution" value="1.62 A"/>
    <property type="chains" value="A=107-390"/>
</dbReference>
<dbReference type="PDB" id="5RZX">
    <property type="method" value="X-ray"/>
    <property type="resolution" value="1.74 A"/>
    <property type="chains" value="A=107-390"/>
</dbReference>
<dbReference type="PDB" id="5RZY">
    <property type="method" value="X-ray"/>
    <property type="resolution" value="1.75 A"/>
    <property type="chains" value="A=107-390"/>
</dbReference>
<dbReference type="PDB" id="5RZZ">
    <property type="method" value="X-ray"/>
    <property type="resolution" value="1.76 A"/>
    <property type="chains" value="A=107-390"/>
</dbReference>
<dbReference type="PDB" id="5S00">
    <property type="method" value="X-ray"/>
    <property type="resolution" value="1.77 A"/>
    <property type="chains" value="A=107-390"/>
</dbReference>
<dbReference type="PDB" id="6IBE">
    <property type="method" value="X-ray"/>
    <property type="resolution" value="1.45 A"/>
    <property type="chains" value="A=107-390"/>
</dbReference>
<dbReference type="PDBsum" id="2HE7"/>
<dbReference type="PDBsum" id="3BIN"/>
<dbReference type="PDBsum" id="5RYM"/>
<dbReference type="PDBsum" id="5RYN"/>
<dbReference type="PDBsum" id="5RYO"/>
<dbReference type="PDBsum" id="5RYP"/>
<dbReference type="PDBsum" id="5RYQ"/>
<dbReference type="PDBsum" id="5RYR"/>
<dbReference type="PDBsum" id="5RYS"/>
<dbReference type="PDBsum" id="5RYT"/>
<dbReference type="PDBsum" id="5RYU"/>
<dbReference type="PDBsum" id="5RYV"/>
<dbReference type="PDBsum" id="5RYW"/>
<dbReference type="PDBsum" id="5RYX"/>
<dbReference type="PDBsum" id="5RYY"/>
<dbReference type="PDBsum" id="5RYZ"/>
<dbReference type="PDBsum" id="5RZ0"/>
<dbReference type="PDBsum" id="5RZ1"/>
<dbReference type="PDBsum" id="5RZ2"/>
<dbReference type="PDBsum" id="5RZ3"/>
<dbReference type="PDBsum" id="5RZ4"/>
<dbReference type="PDBsum" id="5RZ5"/>
<dbReference type="PDBsum" id="5RZ6"/>
<dbReference type="PDBsum" id="5RZ7"/>
<dbReference type="PDBsum" id="5RZ8"/>
<dbReference type="PDBsum" id="5RZ9"/>
<dbReference type="PDBsum" id="5RZA"/>
<dbReference type="PDBsum" id="5RZB"/>
<dbReference type="PDBsum" id="5RZC"/>
<dbReference type="PDBsum" id="5RZD"/>
<dbReference type="PDBsum" id="5RZE"/>
<dbReference type="PDBsum" id="5RZF"/>
<dbReference type="PDBsum" id="5RZG"/>
<dbReference type="PDBsum" id="5RZH"/>
<dbReference type="PDBsum" id="5RZI"/>
<dbReference type="PDBsum" id="5RZJ"/>
<dbReference type="PDBsum" id="5RZK"/>
<dbReference type="PDBsum" id="5RZL"/>
<dbReference type="PDBsum" id="5RZM"/>
<dbReference type="PDBsum" id="5RZN"/>
<dbReference type="PDBsum" id="5RZO"/>
<dbReference type="PDBsum" id="5RZP"/>
<dbReference type="PDBsum" id="5RZQ"/>
<dbReference type="PDBsum" id="5RZR"/>
<dbReference type="PDBsum" id="5RZS"/>
<dbReference type="PDBsum" id="5RZT"/>
<dbReference type="PDBsum" id="5RZU"/>
<dbReference type="PDBsum" id="5RZV"/>
<dbReference type="PDBsum" id="5RZW"/>
<dbReference type="PDBsum" id="5RZX"/>
<dbReference type="PDBsum" id="5RZY"/>
<dbReference type="PDBsum" id="5RZZ"/>
<dbReference type="PDBsum" id="5S00"/>
<dbReference type="PDBsum" id="6IBE"/>
<dbReference type="SMR" id="Q9Y2J2"/>
<dbReference type="BioGRID" id="116753">
    <property type="interactions" value="246"/>
</dbReference>
<dbReference type="CORUM" id="Q9Y2J2"/>
<dbReference type="DIP" id="DIP-17035N"/>
<dbReference type="FunCoup" id="Q9Y2J2">
    <property type="interactions" value="1512"/>
</dbReference>
<dbReference type="IntAct" id="Q9Y2J2">
    <property type="interactions" value="167"/>
</dbReference>
<dbReference type="MINT" id="Q9Y2J2"/>
<dbReference type="STRING" id="9606.ENSP00000343158"/>
<dbReference type="GlyConnect" id="1025">
    <property type="glycosylation" value="11 N-Linked glycans (1 site)"/>
</dbReference>
<dbReference type="GlyCosmos" id="Q9Y2J2">
    <property type="glycosylation" value="3 sites, 12 glycans"/>
</dbReference>
<dbReference type="GlyGen" id="Q9Y2J2">
    <property type="glycosylation" value="3 sites, 11 N-linked glycans (1 site), 1 O-linked glycan (2 sites)"/>
</dbReference>
<dbReference type="iPTMnet" id="Q9Y2J2"/>
<dbReference type="PhosphoSitePlus" id="Q9Y2J2"/>
<dbReference type="SwissPalm" id="Q9Y2J2"/>
<dbReference type="BioMuta" id="EPB41L3"/>
<dbReference type="DMDM" id="17433099"/>
<dbReference type="jPOST" id="Q9Y2J2"/>
<dbReference type="MassIVE" id="Q9Y2J2"/>
<dbReference type="PaxDb" id="9606-ENSP00000343158"/>
<dbReference type="PeptideAtlas" id="Q9Y2J2"/>
<dbReference type="ProteomicsDB" id="24274"/>
<dbReference type="ProteomicsDB" id="85811">
    <molecule id="Q9Y2J2-1"/>
</dbReference>
<dbReference type="ProteomicsDB" id="85812">
    <molecule id="Q9Y2J2-2"/>
</dbReference>
<dbReference type="ProteomicsDB" id="85813">
    <molecule id="Q9Y2J2-3"/>
</dbReference>
<dbReference type="Pumba" id="Q9Y2J2"/>
<dbReference type="Antibodypedia" id="21920">
    <property type="antibodies" value="243 antibodies from 30 providers"/>
</dbReference>
<dbReference type="DNASU" id="23136"/>
<dbReference type="Ensembl" id="ENST00000341928.7">
    <molecule id="Q9Y2J2-1"/>
    <property type="protein sequence ID" value="ENSP00000343158.2"/>
    <property type="gene ID" value="ENSG00000082397.18"/>
</dbReference>
<dbReference type="Ensembl" id="ENST00000540638.6">
    <molecule id="Q9Y2J2-2"/>
    <property type="protein sequence ID" value="ENSP00000442091.2"/>
    <property type="gene ID" value="ENSG00000082397.18"/>
</dbReference>
<dbReference type="Ensembl" id="ENST00000544123.5">
    <molecule id="Q9Y2J2-4"/>
    <property type="protein sequence ID" value="ENSP00000441174.1"/>
    <property type="gene ID" value="ENSG00000082397.18"/>
</dbReference>
<dbReference type="GeneID" id="23136"/>
<dbReference type="KEGG" id="hsa:23136"/>
<dbReference type="MANE-Select" id="ENST00000341928.7">
    <property type="protein sequence ID" value="ENSP00000343158.2"/>
    <property type="RefSeq nucleotide sequence ID" value="NM_012307.5"/>
    <property type="RefSeq protein sequence ID" value="NP_036439.2"/>
</dbReference>
<dbReference type="UCSC" id="uc002kmt.3">
    <molecule id="Q9Y2J2-1"/>
    <property type="organism name" value="human"/>
</dbReference>
<dbReference type="AGR" id="HGNC:3380"/>
<dbReference type="CTD" id="23136"/>
<dbReference type="DisGeNET" id="23136"/>
<dbReference type="GeneCards" id="EPB41L3"/>
<dbReference type="HGNC" id="HGNC:3380">
    <property type="gene designation" value="EPB41L3"/>
</dbReference>
<dbReference type="HPA" id="ENSG00000082397">
    <property type="expression patterns" value="Low tissue specificity"/>
</dbReference>
<dbReference type="MIM" id="605331">
    <property type="type" value="gene"/>
</dbReference>
<dbReference type="neXtProt" id="NX_Q9Y2J2"/>
<dbReference type="OpenTargets" id="ENSG00000082397"/>
<dbReference type="PharmGKB" id="PA27813"/>
<dbReference type="VEuPathDB" id="HostDB:ENSG00000082397"/>
<dbReference type="eggNOG" id="KOG3527">
    <property type="taxonomic scope" value="Eukaryota"/>
</dbReference>
<dbReference type="GeneTree" id="ENSGT00940000157047"/>
<dbReference type="HOGENOM" id="CLU_003623_3_0_1"/>
<dbReference type="InParanoid" id="Q9Y2J2"/>
<dbReference type="OMA" id="SSEEEXA"/>
<dbReference type="OrthoDB" id="6589456at2759"/>
<dbReference type="PAN-GO" id="Q9Y2J2">
    <property type="GO annotations" value="3 GO annotations based on evolutionary models"/>
</dbReference>
<dbReference type="PhylomeDB" id="Q9Y2J2"/>
<dbReference type="TreeFam" id="TF351626"/>
<dbReference type="PathwayCommons" id="Q9Y2J2"/>
<dbReference type="Reactome" id="R-HSA-6794361">
    <property type="pathway name" value="Neurexins and neuroligins"/>
</dbReference>
<dbReference type="Reactome" id="R-HSA-9662360">
    <property type="pathway name" value="Sensory processing of sound by inner hair cells of the cochlea"/>
</dbReference>
<dbReference type="Reactome" id="R-HSA-9662361">
    <property type="pathway name" value="Sensory processing of sound by outer hair cells of the cochlea"/>
</dbReference>
<dbReference type="SignaLink" id="Q9Y2J2"/>
<dbReference type="SIGNOR" id="Q9Y2J2"/>
<dbReference type="BioGRID-ORCS" id="23136">
    <property type="hits" value="21 hits in 1149 CRISPR screens"/>
</dbReference>
<dbReference type="CD-CODE" id="FB4E32DD">
    <property type="entry name" value="Presynaptic clusters and postsynaptic densities"/>
</dbReference>
<dbReference type="ChiTaRS" id="EPB41L3">
    <property type="organism name" value="human"/>
</dbReference>
<dbReference type="EvolutionaryTrace" id="Q9Y2J2"/>
<dbReference type="GeneWiki" id="EPB41L3"/>
<dbReference type="GenomeRNAi" id="23136"/>
<dbReference type="Pharos" id="Q9Y2J2">
    <property type="development level" value="Tbio"/>
</dbReference>
<dbReference type="PRO" id="PR:Q9Y2J2"/>
<dbReference type="Proteomes" id="UP000005640">
    <property type="component" value="Chromosome 18"/>
</dbReference>
<dbReference type="RNAct" id="Q9Y2J2">
    <property type="molecule type" value="protein"/>
</dbReference>
<dbReference type="Bgee" id="ENSG00000082397">
    <property type="expression patterns" value="Expressed in pons and 198 other cell types or tissues"/>
</dbReference>
<dbReference type="ExpressionAtlas" id="Q9Y2J2">
    <property type="expression patterns" value="baseline and differential"/>
</dbReference>
<dbReference type="GO" id="GO:0030054">
    <property type="term" value="C:cell junction"/>
    <property type="evidence" value="ECO:0000314"/>
    <property type="project" value="HPA"/>
</dbReference>
<dbReference type="GO" id="GO:0005911">
    <property type="term" value="C:cell-cell junction"/>
    <property type="evidence" value="ECO:0000314"/>
    <property type="project" value="HGNC-UCL"/>
</dbReference>
<dbReference type="GO" id="GO:0036064">
    <property type="term" value="C:ciliary basal body"/>
    <property type="evidence" value="ECO:0000314"/>
    <property type="project" value="HPA"/>
</dbReference>
<dbReference type="GO" id="GO:0005929">
    <property type="term" value="C:cilium"/>
    <property type="evidence" value="ECO:0000314"/>
    <property type="project" value="HPA"/>
</dbReference>
<dbReference type="GO" id="GO:0005856">
    <property type="term" value="C:cytoskeleton"/>
    <property type="evidence" value="ECO:0000318"/>
    <property type="project" value="GO_Central"/>
</dbReference>
<dbReference type="GO" id="GO:0005829">
    <property type="term" value="C:cytosol"/>
    <property type="evidence" value="ECO:0000314"/>
    <property type="project" value="HPA"/>
</dbReference>
<dbReference type="GO" id="GO:0098978">
    <property type="term" value="C:glutamatergic synapse"/>
    <property type="evidence" value="ECO:0007669"/>
    <property type="project" value="Ensembl"/>
</dbReference>
<dbReference type="GO" id="GO:0044224">
    <property type="term" value="C:juxtaparanode region of axon"/>
    <property type="evidence" value="ECO:0000250"/>
    <property type="project" value="BHF-UCL"/>
</dbReference>
<dbReference type="GO" id="GO:0033270">
    <property type="term" value="C:paranode region of axon"/>
    <property type="evidence" value="ECO:0000250"/>
    <property type="project" value="BHF-UCL"/>
</dbReference>
<dbReference type="GO" id="GO:0005886">
    <property type="term" value="C:plasma membrane"/>
    <property type="evidence" value="ECO:0000314"/>
    <property type="project" value="HPA"/>
</dbReference>
<dbReference type="GO" id="GO:0098794">
    <property type="term" value="C:postsynapse"/>
    <property type="evidence" value="ECO:0007669"/>
    <property type="project" value="Ensembl"/>
</dbReference>
<dbReference type="GO" id="GO:0003779">
    <property type="term" value="F:actin binding"/>
    <property type="evidence" value="ECO:0007669"/>
    <property type="project" value="UniProtKB-KW"/>
</dbReference>
<dbReference type="GO" id="GO:0106006">
    <property type="term" value="F:cytoskeletal protein-membrane anchor activity"/>
    <property type="evidence" value="ECO:0000304"/>
    <property type="project" value="BHF-UCL"/>
</dbReference>
<dbReference type="GO" id="GO:0005200">
    <property type="term" value="F:structural constituent of cytoskeleton"/>
    <property type="evidence" value="ECO:0000304"/>
    <property type="project" value="BHF-UCL"/>
</dbReference>
<dbReference type="GO" id="GO:0031032">
    <property type="term" value="P:actomyosin structure organization"/>
    <property type="evidence" value="ECO:0000318"/>
    <property type="project" value="GO_Central"/>
</dbReference>
<dbReference type="GO" id="GO:0006915">
    <property type="term" value="P:apoptotic process"/>
    <property type="evidence" value="ECO:0007669"/>
    <property type="project" value="UniProtKB-KW"/>
</dbReference>
<dbReference type="GO" id="GO:0030866">
    <property type="term" value="P:cortical actin cytoskeleton organization"/>
    <property type="evidence" value="ECO:0007669"/>
    <property type="project" value="InterPro"/>
</dbReference>
<dbReference type="GO" id="GO:0030865">
    <property type="term" value="P:cortical cytoskeleton organization"/>
    <property type="evidence" value="ECO:0000304"/>
    <property type="project" value="BHF-UCL"/>
</dbReference>
<dbReference type="GO" id="GO:0043217">
    <property type="term" value="P:myelin maintenance"/>
    <property type="evidence" value="ECO:0000250"/>
    <property type="project" value="BHF-UCL"/>
</dbReference>
<dbReference type="GO" id="GO:0048812">
    <property type="term" value="P:neuron projection morphogenesis"/>
    <property type="evidence" value="ECO:0000250"/>
    <property type="project" value="BHF-UCL"/>
</dbReference>
<dbReference type="GO" id="GO:0030913">
    <property type="term" value="P:paranodal junction assembly"/>
    <property type="evidence" value="ECO:0000250"/>
    <property type="project" value="BHF-UCL"/>
</dbReference>
<dbReference type="GO" id="GO:0071205">
    <property type="term" value="P:protein localization to juxtaparanode region of axon"/>
    <property type="evidence" value="ECO:0000250"/>
    <property type="project" value="BHF-UCL"/>
</dbReference>
<dbReference type="GO" id="GO:0002175">
    <property type="term" value="P:protein localization to paranode region of axon"/>
    <property type="evidence" value="ECO:0000250"/>
    <property type="project" value="BHF-UCL"/>
</dbReference>
<dbReference type="GO" id="GO:0072659">
    <property type="term" value="P:protein localization to plasma membrane"/>
    <property type="evidence" value="ECO:0000250"/>
    <property type="project" value="BHF-UCL"/>
</dbReference>
<dbReference type="GO" id="GO:0008360">
    <property type="term" value="P:regulation of cell shape"/>
    <property type="evidence" value="ECO:0000250"/>
    <property type="project" value="BHF-UCL"/>
</dbReference>
<dbReference type="GO" id="GO:0098696">
    <property type="term" value="P:regulation of neurotransmitter receptor localization to postsynaptic specialization membrane"/>
    <property type="evidence" value="ECO:0007669"/>
    <property type="project" value="Ensembl"/>
</dbReference>
<dbReference type="CDD" id="cd14473">
    <property type="entry name" value="FERM_B-lobe"/>
    <property type="match status" value="1"/>
</dbReference>
<dbReference type="CDD" id="cd13184">
    <property type="entry name" value="FERM_C_4_1_family"/>
    <property type="match status" value="1"/>
</dbReference>
<dbReference type="CDD" id="cd17203">
    <property type="entry name" value="FERM_F1_EPB41L3"/>
    <property type="match status" value="1"/>
</dbReference>
<dbReference type="FunFam" id="1.20.80.10:FF:000001">
    <property type="entry name" value="Erythrocyte membrane protein band 4.1"/>
    <property type="match status" value="1"/>
</dbReference>
<dbReference type="FunFam" id="2.30.29.30:FF:000001">
    <property type="entry name" value="Erythrocyte membrane protein band 4.1"/>
    <property type="match status" value="1"/>
</dbReference>
<dbReference type="FunFam" id="3.10.20.90:FF:000002">
    <property type="entry name" value="Erythrocyte protein band 4.1-like 3"/>
    <property type="match status" value="1"/>
</dbReference>
<dbReference type="Gene3D" id="1.20.80.10">
    <property type="match status" value="1"/>
</dbReference>
<dbReference type="Gene3D" id="3.10.20.90">
    <property type="entry name" value="Phosphatidylinositol 3-kinase Catalytic Subunit, Chain A, domain 1"/>
    <property type="match status" value="1"/>
</dbReference>
<dbReference type="Gene3D" id="2.30.29.30">
    <property type="entry name" value="Pleckstrin-homology domain (PH domain)/Phosphotyrosine-binding domain (PTB)"/>
    <property type="match status" value="1"/>
</dbReference>
<dbReference type="InterPro" id="IPR030691">
    <property type="entry name" value="Band4.1-L3_FERM_F1"/>
</dbReference>
<dbReference type="InterPro" id="IPR008379">
    <property type="entry name" value="Band_4.1_C"/>
</dbReference>
<dbReference type="InterPro" id="IPR019749">
    <property type="entry name" value="Band_41_domain"/>
</dbReference>
<dbReference type="InterPro" id="IPR000798">
    <property type="entry name" value="Ez/rad/moesin-like"/>
</dbReference>
<dbReference type="InterPro" id="IPR014847">
    <property type="entry name" value="FA"/>
</dbReference>
<dbReference type="InterPro" id="IPR014352">
    <property type="entry name" value="FERM/acyl-CoA-bd_prot_sf"/>
</dbReference>
<dbReference type="InterPro" id="IPR035963">
    <property type="entry name" value="FERM_2"/>
</dbReference>
<dbReference type="InterPro" id="IPR019748">
    <property type="entry name" value="FERM_central"/>
</dbReference>
<dbReference type="InterPro" id="IPR019747">
    <property type="entry name" value="FERM_CS"/>
</dbReference>
<dbReference type="InterPro" id="IPR000299">
    <property type="entry name" value="FERM_domain"/>
</dbReference>
<dbReference type="InterPro" id="IPR018979">
    <property type="entry name" value="FERM_N"/>
</dbReference>
<dbReference type="InterPro" id="IPR018980">
    <property type="entry name" value="FERM_PH-like_C"/>
</dbReference>
<dbReference type="InterPro" id="IPR011993">
    <property type="entry name" value="PH-like_dom_sf"/>
</dbReference>
<dbReference type="InterPro" id="IPR007477">
    <property type="entry name" value="SAB_dom"/>
</dbReference>
<dbReference type="InterPro" id="IPR029071">
    <property type="entry name" value="Ubiquitin-like_domsf"/>
</dbReference>
<dbReference type="PANTHER" id="PTHR23280">
    <property type="entry name" value="4.1 G PROTEIN"/>
    <property type="match status" value="1"/>
</dbReference>
<dbReference type="PANTHER" id="PTHR23280:SF20">
    <property type="entry name" value="BAND 4.1-LIKE PROTEIN 3"/>
    <property type="match status" value="1"/>
</dbReference>
<dbReference type="Pfam" id="PF05902">
    <property type="entry name" value="4_1_CTD"/>
    <property type="match status" value="1"/>
</dbReference>
<dbReference type="Pfam" id="PF08736">
    <property type="entry name" value="FA"/>
    <property type="match status" value="1"/>
</dbReference>
<dbReference type="Pfam" id="PF09380">
    <property type="entry name" value="FERM_C"/>
    <property type="match status" value="1"/>
</dbReference>
<dbReference type="Pfam" id="PF00373">
    <property type="entry name" value="FERM_M"/>
    <property type="match status" value="1"/>
</dbReference>
<dbReference type="Pfam" id="PF09379">
    <property type="entry name" value="FERM_N"/>
    <property type="match status" value="1"/>
</dbReference>
<dbReference type="Pfam" id="PF04382">
    <property type="entry name" value="SAB"/>
    <property type="match status" value="1"/>
</dbReference>
<dbReference type="PIRSF" id="PIRSF002304">
    <property type="entry name" value="Membrane_skeletal_4_1"/>
    <property type="match status" value="1"/>
</dbReference>
<dbReference type="PRINTS" id="PR00935">
    <property type="entry name" value="BAND41"/>
</dbReference>
<dbReference type="PRINTS" id="PR00661">
    <property type="entry name" value="ERMFAMILY"/>
</dbReference>
<dbReference type="SMART" id="SM00295">
    <property type="entry name" value="B41"/>
    <property type="match status" value="1"/>
</dbReference>
<dbReference type="SMART" id="SM01195">
    <property type="entry name" value="FA"/>
    <property type="match status" value="1"/>
</dbReference>
<dbReference type="SMART" id="SM01196">
    <property type="entry name" value="FERM_C"/>
    <property type="match status" value="1"/>
</dbReference>
<dbReference type="SUPFAM" id="SSF50729">
    <property type="entry name" value="PH domain-like"/>
    <property type="match status" value="1"/>
</dbReference>
<dbReference type="SUPFAM" id="SSF47031">
    <property type="entry name" value="Second domain of FERM"/>
    <property type="match status" value="1"/>
</dbReference>
<dbReference type="SUPFAM" id="SSF54236">
    <property type="entry name" value="Ubiquitin-like"/>
    <property type="match status" value="1"/>
</dbReference>
<dbReference type="PROSITE" id="PS00660">
    <property type="entry name" value="FERM_1"/>
    <property type="match status" value="1"/>
</dbReference>
<dbReference type="PROSITE" id="PS00661">
    <property type="entry name" value="FERM_2"/>
    <property type="match status" value="1"/>
</dbReference>
<dbReference type="PROSITE" id="PS50057">
    <property type="entry name" value="FERM_3"/>
    <property type="match status" value="1"/>
</dbReference>
<protein>
    <recommendedName>
        <fullName>Band 4.1-like protein 3</fullName>
    </recommendedName>
    <alternativeName>
        <fullName>4.1B</fullName>
    </alternativeName>
    <alternativeName>
        <fullName>Differentially expressed in adenocarcinoma of the lung protein 1</fullName>
        <shortName>DAL-1</shortName>
    </alternativeName>
    <alternativeName>
        <fullName evidence="16">Erythrocyte membrane protein band 4.1-like 3</fullName>
    </alternativeName>
    <component>
        <recommendedName>
            <fullName>Band 4.1-like protein 3, N-terminally processed</fullName>
        </recommendedName>
    </component>
</protein>
<name>E41L3_HUMAN</name>
<reference key="1">
    <citation type="journal article" date="1999" name="Cancer Res.">
        <title>A novel member of the NF2/ERM/4.1 superfamily with growth suppressing properties in lung cancer.</title>
        <authorList>
            <person name="Tran Y.K."/>
            <person name="Boegler O."/>
            <person name="Gorse K.M."/>
            <person name="Wieland I."/>
            <person name="Green M.R."/>
            <person name="Newsham I.F."/>
        </authorList>
    </citation>
    <scope>NUCLEOTIDE SEQUENCE [MRNA] (ISOFORM 3)</scope>
    <scope>FUNCTION</scope>
    <scope>SUBCELLULAR LOCATION</scope>
    <scope>TISSUE SPECIFICITY</scope>
    <source>
        <tissue>Lung</tissue>
    </source>
</reference>
<reference key="2">
    <citation type="journal article" date="1999" name="DNA Res.">
        <title>Prediction of the coding sequences of unidentified human genes. XIII. The complete sequences of 100 new cDNA clones from brain which code for large proteins in vitro.</title>
        <authorList>
            <person name="Nagase T."/>
            <person name="Ishikawa K."/>
            <person name="Suyama M."/>
            <person name="Kikuno R."/>
            <person name="Hirosawa M."/>
            <person name="Miyajima N."/>
            <person name="Tanaka A."/>
            <person name="Kotani H."/>
            <person name="Nomura N."/>
            <person name="Ohara O."/>
        </authorList>
    </citation>
    <scope>NUCLEOTIDE SEQUENCE [LARGE SCALE MRNA] (ISOFORM 1)</scope>
    <source>
        <tissue>Brain</tissue>
    </source>
</reference>
<reference key="3">
    <citation type="journal article" date="2004" name="Nat. Genet.">
        <title>Complete sequencing and characterization of 21,243 full-length human cDNAs.</title>
        <authorList>
            <person name="Ota T."/>
            <person name="Suzuki Y."/>
            <person name="Nishikawa T."/>
            <person name="Otsuki T."/>
            <person name="Sugiyama T."/>
            <person name="Irie R."/>
            <person name="Wakamatsu A."/>
            <person name="Hayashi K."/>
            <person name="Sato H."/>
            <person name="Nagai K."/>
            <person name="Kimura K."/>
            <person name="Makita H."/>
            <person name="Sekine M."/>
            <person name="Obayashi M."/>
            <person name="Nishi T."/>
            <person name="Shibahara T."/>
            <person name="Tanaka T."/>
            <person name="Ishii S."/>
            <person name="Yamamoto J."/>
            <person name="Saito K."/>
            <person name="Kawai Y."/>
            <person name="Isono Y."/>
            <person name="Nakamura Y."/>
            <person name="Nagahari K."/>
            <person name="Murakami K."/>
            <person name="Yasuda T."/>
            <person name="Iwayanagi T."/>
            <person name="Wagatsuma M."/>
            <person name="Shiratori A."/>
            <person name="Sudo H."/>
            <person name="Hosoiri T."/>
            <person name="Kaku Y."/>
            <person name="Kodaira H."/>
            <person name="Kondo H."/>
            <person name="Sugawara M."/>
            <person name="Takahashi M."/>
            <person name="Kanda K."/>
            <person name="Yokoi T."/>
            <person name="Furuya T."/>
            <person name="Kikkawa E."/>
            <person name="Omura Y."/>
            <person name="Abe K."/>
            <person name="Kamihara K."/>
            <person name="Katsuta N."/>
            <person name="Sato K."/>
            <person name="Tanikawa M."/>
            <person name="Yamazaki M."/>
            <person name="Ninomiya K."/>
            <person name="Ishibashi T."/>
            <person name="Yamashita H."/>
            <person name="Murakawa K."/>
            <person name="Fujimori K."/>
            <person name="Tanai H."/>
            <person name="Kimata M."/>
            <person name="Watanabe M."/>
            <person name="Hiraoka S."/>
            <person name="Chiba Y."/>
            <person name="Ishida S."/>
            <person name="Ono Y."/>
            <person name="Takiguchi S."/>
            <person name="Watanabe S."/>
            <person name="Yosida M."/>
            <person name="Hotuta T."/>
            <person name="Kusano J."/>
            <person name="Kanehori K."/>
            <person name="Takahashi-Fujii A."/>
            <person name="Hara H."/>
            <person name="Tanase T.-O."/>
            <person name="Nomura Y."/>
            <person name="Togiya S."/>
            <person name="Komai F."/>
            <person name="Hara R."/>
            <person name="Takeuchi K."/>
            <person name="Arita M."/>
            <person name="Imose N."/>
            <person name="Musashino K."/>
            <person name="Yuuki H."/>
            <person name="Oshima A."/>
            <person name="Sasaki N."/>
            <person name="Aotsuka S."/>
            <person name="Yoshikawa Y."/>
            <person name="Matsunawa H."/>
            <person name="Ichihara T."/>
            <person name="Shiohata N."/>
            <person name="Sano S."/>
            <person name="Moriya S."/>
            <person name="Momiyama H."/>
            <person name="Satoh N."/>
            <person name="Takami S."/>
            <person name="Terashima Y."/>
            <person name="Suzuki O."/>
            <person name="Nakagawa S."/>
            <person name="Senoh A."/>
            <person name="Mizoguchi H."/>
            <person name="Goto Y."/>
            <person name="Shimizu F."/>
            <person name="Wakebe H."/>
            <person name="Hishigaki H."/>
            <person name="Watanabe T."/>
            <person name="Sugiyama A."/>
            <person name="Takemoto M."/>
            <person name="Kawakami B."/>
            <person name="Yamazaki M."/>
            <person name="Watanabe K."/>
            <person name="Kumagai A."/>
            <person name="Itakura S."/>
            <person name="Fukuzumi Y."/>
            <person name="Fujimori Y."/>
            <person name="Komiyama M."/>
            <person name="Tashiro H."/>
            <person name="Tanigami A."/>
            <person name="Fujiwara T."/>
            <person name="Ono T."/>
            <person name="Yamada K."/>
            <person name="Fujii Y."/>
            <person name="Ozaki K."/>
            <person name="Hirao M."/>
            <person name="Ohmori Y."/>
            <person name="Kawabata A."/>
            <person name="Hikiji T."/>
            <person name="Kobatake N."/>
            <person name="Inagaki H."/>
            <person name="Ikema Y."/>
            <person name="Okamoto S."/>
            <person name="Okitani R."/>
            <person name="Kawakami T."/>
            <person name="Noguchi S."/>
            <person name="Itoh T."/>
            <person name="Shigeta K."/>
            <person name="Senba T."/>
            <person name="Matsumura K."/>
            <person name="Nakajima Y."/>
            <person name="Mizuno T."/>
            <person name="Morinaga M."/>
            <person name="Sasaki M."/>
            <person name="Togashi T."/>
            <person name="Oyama M."/>
            <person name="Hata H."/>
            <person name="Watanabe M."/>
            <person name="Komatsu T."/>
            <person name="Mizushima-Sugano J."/>
            <person name="Satoh T."/>
            <person name="Shirai Y."/>
            <person name="Takahashi Y."/>
            <person name="Nakagawa K."/>
            <person name="Okumura K."/>
            <person name="Nagase T."/>
            <person name="Nomura N."/>
            <person name="Kikuchi H."/>
            <person name="Masuho Y."/>
            <person name="Yamashita R."/>
            <person name="Nakai K."/>
            <person name="Yada T."/>
            <person name="Nakamura Y."/>
            <person name="Ohara O."/>
            <person name="Isogai T."/>
            <person name="Sugano S."/>
        </authorList>
    </citation>
    <scope>NUCLEOTIDE SEQUENCE [LARGE SCALE MRNA] (ISOFORM 4)</scope>
    <source>
        <tissue>Brain</tissue>
    </source>
</reference>
<reference key="4">
    <citation type="journal article" date="2005" name="Nature">
        <title>DNA sequence and analysis of human chromosome 18.</title>
        <authorList>
            <person name="Nusbaum C."/>
            <person name="Zody M.C."/>
            <person name="Borowsky M.L."/>
            <person name="Kamal M."/>
            <person name="Kodira C.D."/>
            <person name="Taylor T.D."/>
            <person name="Whittaker C.A."/>
            <person name="Chang J.L."/>
            <person name="Cuomo C.A."/>
            <person name="Dewar K."/>
            <person name="FitzGerald M.G."/>
            <person name="Yang X."/>
            <person name="Abouelleil A."/>
            <person name="Allen N.R."/>
            <person name="Anderson S."/>
            <person name="Bloom T."/>
            <person name="Bugalter B."/>
            <person name="Butler J."/>
            <person name="Cook A."/>
            <person name="DeCaprio D."/>
            <person name="Engels R."/>
            <person name="Garber M."/>
            <person name="Gnirke A."/>
            <person name="Hafez N."/>
            <person name="Hall J.L."/>
            <person name="Norman C.H."/>
            <person name="Itoh T."/>
            <person name="Jaffe D.B."/>
            <person name="Kuroki Y."/>
            <person name="Lehoczky J."/>
            <person name="Lui A."/>
            <person name="Macdonald P."/>
            <person name="Mauceli E."/>
            <person name="Mikkelsen T.S."/>
            <person name="Naylor J.W."/>
            <person name="Nicol R."/>
            <person name="Nguyen C."/>
            <person name="Noguchi H."/>
            <person name="O'Leary S.B."/>
            <person name="Piqani B."/>
            <person name="Smith C.L."/>
            <person name="Talamas J.A."/>
            <person name="Topham K."/>
            <person name="Totoki Y."/>
            <person name="Toyoda A."/>
            <person name="Wain H.M."/>
            <person name="Young S.K."/>
            <person name="Zeng Q."/>
            <person name="Zimmer A.R."/>
            <person name="Fujiyama A."/>
            <person name="Hattori M."/>
            <person name="Birren B.W."/>
            <person name="Sakaki Y."/>
            <person name="Lander E.S."/>
        </authorList>
    </citation>
    <scope>NUCLEOTIDE SEQUENCE [LARGE SCALE GENOMIC DNA]</scope>
</reference>
<reference key="5">
    <citation type="journal article" date="2004" name="Genome Res.">
        <title>The status, quality, and expansion of the NIH full-length cDNA project: the Mammalian Gene Collection (MGC).</title>
        <authorList>
            <consortium name="The MGC Project Team"/>
        </authorList>
    </citation>
    <scope>NUCLEOTIDE SEQUENCE [LARGE SCALE MRNA] (ISOFORM 2)</scope>
    <source>
        <tissue>Lung</tissue>
    </source>
</reference>
<reference key="6">
    <citation type="journal article" date="2002" name="Cancer Res.">
        <title>Direct association of TSLC1 and DAL-1, two distinct tumor suppressor proteins in lung cancer.</title>
        <authorList>
            <person name="Yageta M."/>
            <person name="Kuramochi M."/>
            <person name="Masuda M."/>
            <person name="Fukami T."/>
            <person name="Fukuhara H."/>
            <person name="Maruyama T."/>
            <person name="Shibuya M."/>
            <person name="Murakami Y."/>
        </authorList>
    </citation>
    <scope>INTERACTION WITH CADM1</scope>
</reference>
<reference key="7">
    <citation type="journal article" date="2004" name="Oncogene">
        <title>DAL-1/4.1B tumor suppressor interacts with protein arginine N-methyltransferase 3 (PRMT3) and inhibits its ability to methylate substrates in vitro and in vivo.</title>
        <authorList>
            <person name="Singh V."/>
            <person name="Miranda T.B."/>
            <person name="Jiang W."/>
            <person name="Frankel A."/>
            <person name="Roemer M.E."/>
            <person name="Robb V.A."/>
            <person name="Gutmann D.H."/>
            <person name="Herschman H.R."/>
            <person name="Clarke S."/>
            <person name="Newsham I.F."/>
        </authorList>
    </citation>
    <scope>FUNCTION</scope>
    <scope>INTERACTION WITH PRMT3; PRMT5 AND PRMT6</scope>
</reference>
<reference key="8">
    <citation type="journal article" date="2005" name="Biochem. Biophys. Res. Commun.">
        <title>The tumor suppressor DAL-1/4.1B modulates protein arginine N-methyltransferase 5 activity in a substrate-specific manner.</title>
        <authorList>
            <person name="Jiang W."/>
            <person name="Roemer M.E."/>
            <person name="Newsham I.F."/>
        </authorList>
    </citation>
    <scope>FUNCTION</scope>
    <scope>INTERACTION WITH PRMT5</scope>
</reference>
<reference key="9">
    <citation type="journal article" date="2006" name="Mol. Cancer">
        <title>The tumor suppressor DAL-1/4.1B and protein methylation cooperate in inducing apoptosis in MCF-7 breast cancer cells.</title>
        <authorList>
            <person name="Jiang W."/>
            <person name="Newsham I.F."/>
        </authorList>
    </citation>
    <scope>FUNCTION</scope>
</reference>
<reference key="10">
    <citation type="journal article" date="2006" name="Nat. Biotechnol.">
        <title>A probability-based approach for high-throughput protein phosphorylation analysis and site localization.</title>
        <authorList>
            <person name="Beausoleil S.A."/>
            <person name="Villen J."/>
            <person name="Gerber S.A."/>
            <person name="Rush J."/>
            <person name="Gygi S.P."/>
        </authorList>
    </citation>
    <scope>PHOSPHORYLATION [LARGE SCALE ANALYSIS] AT SER-962</scope>
    <scope>IDENTIFICATION BY MASS SPECTROMETRY [LARGE SCALE ANALYSIS]</scope>
    <source>
        <tissue>Cervix carcinoma</tissue>
    </source>
</reference>
<reference key="11">
    <citation type="journal article" date="2009" name="Anal. Chem.">
        <title>Lys-N and trypsin cover complementary parts of the phosphoproteome in a refined SCX-based approach.</title>
        <authorList>
            <person name="Gauci S."/>
            <person name="Helbig A.O."/>
            <person name="Slijper M."/>
            <person name="Krijgsveld J."/>
            <person name="Heck A.J."/>
            <person name="Mohammed S."/>
        </authorList>
    </citation>
    <scope>ACETYLATION [LARGE SCALE ANALYSIS] AT MET-1 AND THR-2</scope>
    <scope>CLEAVAGE OF INITIATOR METHIONINE [LARGE SCALE ANALYSIS]</scope>
    <scope>IDENTIFICATION BY MASS SPECTROMETRY [LARGE SCALE ANALYSIS]</scope>
</reference>
<reference key="12">
    <citation type="journal article" date="2010" name="Sci. Signal.">
        <title>Quantitative phosphoproteomics reveals widespread full phosphorylation site occupancy during mitosis.</title>
        <authorList>
            <person name="Olsen J.V."/>
            <person name="Vermeulen M."/>
            <person name="Santamaria A."/>
            <person name="Kumar C."/>
            <person name="Miller M.L."/>
            <person name="Jensen L.J."/>
            <person name="Gnad F."/>
            <person name="Cox J."/>
            <person name="Jensen T.S."/>
            <person name="Nigg E.A."/>
            <person name="Brunak S."/>
            <person name="Mann M."/>
        </authorList>
    </citation>
    <scope>IDENTIFICATION BY MASS SPECTROMETRY [LARGE SCALE ANALYSIS]</scope>
    <source>
        <tissue>Cervix carcinoma</tissue>
    </source>
</reference>
<reference key="13">
    <citation type="journal article" date="2011" name="BMC Syst. Biol.">
        <title>Initial characterization of the human central proteome.</title>
        <authorList>
            <person name="Burkard T.R."/>
            <person name="Planyavsky M."/>
            <person name="Kaupe I."/>
            <person name="Breitwieser F.P."/>
            <person name="Buerckstuemmer T."/>
            <person name="Bennett K.L."/>
            <person name="Superti-Furga G."/>
            <person name="Colinge J."/>
        </authorList>
    </citation>
    <scope>IDENTIFICATION BY MASS SPECTROMETRY [LARGE SCALE ANALYSIS]</scope>
</reference>
<reference key="14">
    <citation type="journal article" date="2011" name="Sci. Signal.">
        <title>System-wide temporal characterization of the proteome and phosphoproteome of human embryonic stem cell differentiation.</title>
        <authorList>
            <person name="Rigbolt K.T."/>
            <person name="Prokhorova T.A."/>
            <person name="Akimov V."/>
            <person name="Henningsen J."/>
            <person name="Johansen P.T."/>
            <person name="Kratchmarova I."/>
            <person name="Kassem M."/>
            <person name="Mann M."/>
            <person name="Olsen J.V."/>
            <person name="Blagoev B."/>
        </authorList>
    </citation>
    <scope>PHOSPHORYLATION [LARGE SCALE ANALYSIS] AT SER-460 AND THR-469</scope>
    <scope>IDENTIFICATION BY MASS SPECTROMETRY [LARGE SCALE ANALYSIS]</scope>
</reference>
<reference key="15">
    <citation type="journal article" date="2014" name="J. Proteomics">
        <title>An enzyme assisted RP-RPLC approach for in-depth analysis of human liver phosphoproteome.</title>
        <authorList>
            <person name="Bian Y."/>
            <person name="Song C."/>
            <person name="Cheng K."/>
            <person name="Dong M."/>
            <person name="Wang F."/>
            <person name="Huang J."/>
            <person name="Sun D."/>
            <person name="Wang L."/>
            <person name="Ye M."/>
            <person name="Zou H."/>
        </authorList>
    </citation>
    <scope>PHOSPHORYLATION [LARGE SCALE ANALYSIS] AT SER-420 AND SER-962</scope>
    <scope>IDENTIFICATION BY MASS SPECTROMETRY [LARGE SCALE ANALYSIS]</scope>
    <source>
        <tissue>Liver</tissue>
    </source>
</reference>
<reference key="16">
    <citation type="journal article" date="2015" name="Proteomics">
        <title>N-terminome analysis of the human mitochondrial proteome.</title>
        <authorList>
            <person name="Vaca Jacome A.S."/>
            <person name="Rabilloud T."/>
            <person name="Schaeffer-Reiss C."/>
            <person name="Rompais M."/>
            <person name="Ayoub D."/>
            <person name="Lane L."/>
            <person name="Bairoch A."/>
            <person name="Van Dorsselaer A."/>
            <person name="Carapito C."/>
        </authorList>
    </citation>
    <scope>IDENTIFICATION BY MASS SPECTROMETRY [LARGE SCALE ANALYSIS]</scope>
</reference>
<reference key="17">
    <citation type="journal article" date="2011" name="J. Biol. Chem.">
        <title>Structural basis of tumor suppressor in lung cancer 1 (TSLC1) binding to differentially expressed in adenocarcinoma of the lung (DAL-1/4.1B).</title>
        <authorList>
            <person name="Busam R.D."/>
            <person name="Thorsell A.G."/>
            <person name="Flores A."/>
            <person name="Hammarstrom M."/>
            <person name="Persson C."/>
            <person name="Obrink B."/>
            <person name="Hallberg B.M."/>
        </authorList>
    </citation>
    <scope>X-RAY CRYSTALLOGRAPHY (2.0 ANGSTROMS) OF 108-390 IN COMPLEX WITH CADM1</scope>
    <scope>INTERACTION WITH CADM1</scope>
</reference>
<proteinExistence type="evidence at protein level"/>
<keyword id="KW-0002">3D-structure</keyword>
<keyword id="KW-0007">Acetylation</keyword>
<keyword id="KW-0009">Actin-binding</keyword>
<keyword id="KW-0025">Alternative splicing</keyword>
<keyword id="KW-0053">Apoptosis</keyword>
<keyword id="KW-0965">Cell junction</keyword>
<keyword id="KW-1003">Cell membrane</keyword>
<keyword id="KW-0963">Cytoplasm</keyword>
<keyword id="KW-0206">Cytoskeleton</keyword>
<keyword id="KW-0472">Membrane</keyword>
<keyword id="KW-0597">Phosphoprotein</keyword>
<keyword id="KW-1267">Proteomics identification</keyword>
<keyword id="KW-1185">Reference proteome</keyword>
<keyword id="KW-0043">Tumor suppressor</keyword>
<feature type="chain" id="PRO_0000219399" description="Band 4.1-like protein 3">
    <location>
        <begin position="1"/>
        <end position="1087"/>
    </location>
</feature>
<feature type="initiator methionine" description="Removed; alternate" evidence="18">
    <location>
        <position position="1"/>
    </location>
</feature>
<feature type="chain" id="PRO_0000423194" description="Band 4.1-like protein 3, N-terminally processed">
    <location>
        <begin position="2"/>
        <end position="1087"/>
    </location>
</feature>
<feature type="domain" description="FERM" evidence="4">
    <location>
        <begin position="110"/>
        <end position="391"/>
    </location>
</feature>
<feature type="region of interest" description="Disordered" evidence="5">
    <location>
        <begin position="1"/>
        <end position="43"/>
    </location>
</feature>
<feature type="region of interest" description="Hydrophilic">
    <location>
        <begin position="394"/>
        <end position="513"/>
    </location>
</feature>
<feature type="region of interest" description="Disordered" evidence="5">
    <location>
        <begin position="459"/>
        <end position="529"/>
    </location>
</feature>
<feature type="region of interest" description="Spectrin--actin-binding" evidence="3">
    <location>
        <begin position="514"/>
        <end position="860"/>
    </location>
</feature>
<feature type="region of interest" description="Disordered" evidence="5">
    <location>
        <begin position="541"/>
        <end position="563"/>
    </location>
</feature>
<feature type="region of interest" description="Disordered" evidence="5">
    <location>
        <begin position="675"/>
        <end position="715"/>
    </location>
</feature>
<feature type="region of interest" description="C-terminal (CTD)">
    <location>
        <begin position="861"/>
        <end position="1083"/>
    </location>
</feature>
<feature type="region of interest" description="Disordered" evidence="5">
    <location>
        <begin position="937"/>
        <end position="965"/>
    </location>
</feature>
<feature type="compositionally biased region" description="Low complexity" evidence="5">
    <location>
        <begin position="20"/>
        <end position="32"/>
    </location>
</feature>
<feature type="compositionally biased region" description="Polar residues" evidence="5">
    <location>
        <begin position="459"/>
        <end position="469"/>
    </location>
</feature>
<feature type="compositionally biased region" description="Polar residues" evidence="5">
    <location>
        <begin position="516"/>
        <end position="526"/>
    </location>
</feature>
<feature type="compositionally biased region" description="Acidic residues" evidence="5">
    <location>
        <begin position="681"/>
        <end position="691"/>
    </location>
</feature>
<feature type="compositionally biased region" description="Low complexity" evidence="5">
    <location>
        <begin position="698"/>
        <end position="707"/>
    </location>
</feature>
<feature type="compositionally biased region" description="Polar residues" evidence="5">
    <location>
        <begin position="947"/>
        <end position="960"/>
    </location>
</feature>
<feature type="modified residue" description="N-acetylmethionine" evidence="18">
    <location>
        <position position="1"/>
    </location>
</feature>
<feature type="modified residue" description="N-acetylthreonine; in Band 4.1-like protein 3, N-terminally processed" evidence="18">
    <location>
        <position position="2"/>
    </location>
</feature>
<feature type="modified residue" description="Phosphoserine" evidence="2">
    <location>
        <position position="88"/>
    </location>
</feature>
<feature type="modified residue" description="Phosphoserine" evidence="20">
    <location>
        <position position="420"/>
    </location>
</feature>
<feature type="modified residue" description="Phosphoserine" evidence="2">
    <location>
        <position position="443"/>
    </location>
</feature>
<feature type="modified residue" description="Phosphoserine" evidence="19">
    <location>
        <position position="460"/>
    </location>
</feature>
<feature type="modified residue" description="Phosphothreonine" evidence="19">
    <location>
        <position position="469"/>
    </location>
</feature>
<feature type="modified residue" description="Phosphothreonine" evidence="2">
    <location>
        <position position="492"/>
    </location>
</feature>
<feature type="modified residue" description="Phosphothreonine" evidence="2">
    <location>
        <position position="706"/>
    </location>
</feature>
<feature type="modified residue" description="Phosphoserine" evidence="2">
    <location>
        <position position="708"/>
    </location>
</feature>
<feature type="modified residue" description="Phosphoserine" evidence="2">
    <location>
        <position position="960"/>
    </location>
</feature>
<feature type="modified residue" description="Phosphoserine" evidence="17 20">
    <location>
        <position position="962"/>
    </location>
</feature>
<feature type="modified residue" description="Phosphothreonine" evidence="2">
    <location>
        <position position="1081"/>
    </location>
</feature>
<feature type="splice variant" id="VSP_000482" description="In isoform 2, isoform 3 and isoform 4." evidence="12 13 14">
    <original>G</original>
    <variation>GASVNENHEIYMKDSMSAA</variation>
    <location>
        <position position="446"/>
    </location>
</feature>
<feature type="splice variant" id="VSP_000483" description="In isoform 2, isoform 3 and isoform 4." evidence="12 13 14">
    <location>
        <begin position="503"/>
        <end position="689"/>
    </location>
</feature>
<feature type="splice variant" id="VSP_000484" description="In isoform 2 and isoform 3." evidence="13 14">
    <location>
        <begin position="708"/>
        <end position="719"/>
    </location>
</feature>
<feature type="splice variant" id="VSP_000485" description="In isoform 2 and isoform 3." evidence="13 14">
    <location>
        <begin position="784"/>
        <end position="824"/>
    </location>
</feature>
<feature type="splice variant" id="VSP_000486" description="In isoform 3." evidence="14">
    <location>
        <begin position="835"/>
        <end position="1087"/>
    </location>
</feature>
<feature type="splice variant" id="VSP_054819" description="In isoform 4." evidence="12">
    <original>A</original>
    <variation>E</variation>
    <location>
        <position position="1052"/>
    </location>
</feature>
<feature type="splice variant" id="VSP_054820" description="In isoform 4." evidence="12">
    <location>
        <begin position="1053"/>
        <end position="1087"/>
    </location>
</feature>
<feature type="sequence variant" id="VAR_048353" description="In dbSNP:rs9966357.">
    <original>A</original>
    <variation>T</variation>
    <location>
        <position position="555"/>
    </location>
</feature>
<feature type="sequence variant" id="VAR_048354" description="In dbSNP:rs8082898.">
    <original>Y</original>
    <variation>C</variation>
    <location>
        <position position="575"/>
    </location>
</feature>
<feature type="sequence variant" id="VAR_048355" description="In dbSNP:rs8096452.">
    <original>E</original>
    <variation>Q</variation>
    <location>
        <position position="859"/>
    </location>
</feature>
<feature type="sequence conflict" description="In Ref. 3; BAH12571." evidence="15" ref="3">
    <original>K</original>
    <variation>E</variation>
    <location>
        <position position="12"/>
    </location>
</feature>
<feature type="sequence conflict" description="In Ref. 1; AAC79806." evidence="15" ref="1">
    <location>
        <position position="32"/>
    </location>
</feature>
<feature type="sequence conflict" description="In Ref. 1; AAC79806." evidence="15" ref="1">
    <original>R</original>
    <variation>Q</variation>
    <location>
        <position position="498"/>
    </location>
</feature>
<feature type="strand" evidence="23">
    <location>
        <begin position="109"/>
        <end position="115"/>
    </location>
</feature>
<feature type="strand" evidence="23">
    <location>
        <begin position="121"/>
        <end position="127"/>
    </location>
</feature>
<feature type="helix" evidence="23">
    <location>
        <begin position="132"/>
        <end position="142"/>
    </location>
</feature>
<feature type="helix" evidence="23">
    <location>
        <begin position="148"/>
        <end position="150"/>
    </location>
</feature>
<feature type="strand" evidence="23">
    <location>
        <begin position="151"/>
        <end position="156"/>
    </location>
</feature>
<feature type="strand" evidence="23">
    <location>
        <begin position="162"/>
        <end position="164"/>
    </location>
</feature>
<feature type="strand" evidence="23">
    <location>
        <begin position="169"/>
        <end position="171"/>
    </location>
</feature>
<feature type="helix" evidence="23">
    <location>
        <begin position="172"/>
        <end position="175"/>
    </location>
</feature>
<feature type="strand" evidence="23">
    <location>
        <begin position="180"/>
        <end position="188"/>
    </location>
</feature>
<feature type="helix" evidence="23">
    <location>
        <begin position="193"/>
        <end position="195"/>
    </location>
</feature>
<feature type="helix" evidence="23">
    <location>
        <begin position="199"/>
        <end position="214"/>
    </location>
</feature>
<feature type="helix" evidence="23">
    <location>
        <begin position="222"/>
        <end position="237"/>
    </location>
</feature>
<feature type="turn" evidence="23">
    <location>
        <begin position="242"/>
        <end position="244"/>
    </location>
</feature>
<feature type="turn" evidence="22">
    <location>
        <begin position="249"/>
        <end position="252"/>
    </location>
</feature>
<feature type="strand" evidence="23">
    <location>
        <begin position="256"/>
        <end position="258"/>
    </location>
</feature>
<feature type="helix" evidence="23">
    <location>
        <begin position="261"/>
        <end position="272"/>
    </location>
</feature>
<feature type="turn" evidence="23">
    <location>
        <begin position="273"/>
        <end position="276"/>
    </location>
</feature>
<feature type="helix" evidence="23">
    <location>
        <begin position="279"/>
        <end position="290"/>
    </location>
</feature>
<feature type="turn" evidence="23">
    <location>
        <begin position="294"/>
        <end position="297"/>
    </location>
</feature>
<feature type="strand" evidence="23">
    <location>
        <begin position="299"/>
        <end position="305"/>
    </location>
</feature>
<feature type="strand" evidence="23">
    <location>
        <begin position="310"/>
        <end position="315"/>
    </location>
</feature>
<feature type="strand" evidence="23">
    <location>
        <begin position="317"/>
        <end position="333"/>
    </location>
</feature>
<feature type="helix" evidence="23">
    <location>
        <begin position="334"/>
        <end position="336"/>
    </location>
</feature>
<feature type="strand" evidence="23">
    <location>
        <begin position="337"/>
        <end position="343"/>
    </location>
</feature>
<feature type="strand" evidence="23">
    <location>
        <begin position="346"/>
        <end position="351"/>
    </location>
</feature>
<feature type="turn" evidence="21">
    <location>
        <begin position="354"/>
        <end position="357"/>
    </location>
</feature>
<feature type="strand" evidence="23">
    <location>
        <begin position="361"/>
        <end position="366"/>
    </location>
</feature>
<feature type="helix" evidence="23">
    <location>
        <begin position="370"/>
        <end position="389"/>
    </location>
</feature>
<organism>
    <name type="scientific">Homo sapiens</name>
    <name type="common">Human</name>
    <dbReference type="NCBI Taxonomy" id="9606"/>
    <lineage>
        <taxon>Eukaryota</taxon>
        <taxon>Metazoa</taxon>
        <taxon>Chordata</taxon>
        <taxon>Craniata</taxon>
        <taxon>Vertebrata</taxon>
        <taxon>Euteleostomi</taxon>
        <taxon>Mammalia</taxon>
        <taxon>Eutheria</taxon>
        <taxon>Euarchontoglires</taxon>
        <taxon>Primates</taxon>
        <taxon>Haplorrhini</taxon>
        <taxon>Catarrhini</taxon>
        <taxon>Hominidae</taxon>
        <taxon>Homo</taxon>
    </lineage>
</organism>